<organism>
    <name type="scientific">Yersinia pseudotuberculosis serotype O:3 (strain YPIII)</name>
    <dbReference type="NCBI Taxonomy" id="502800"/>
    <lineage>
        <taxon>Bacteria</taxon>
        <taxon>Pseudomonadati</taxon>
        <taxon>Pseudomonadota</taxon>
        <taxon>Gammaproteobacteria</taxon>
        <taxon>Enterobacterales</taxon>
        <taxon>Yersiniaceae</taxon>
        <taxon>Yersinia</taxon>
    </lineage>
</organism>
<accession>B1JJ99</accession>
<sequence length="61" mass="6853">MLILTRRVGETLMIGDEVTVTVLGVKGNQVRIGVNAPKEVSVHREEIYQRIQAEKSQPTTY</sequence>
<proteinExistence type="inferred from homology"/>
<evidence type="ECO:0000255" key="1">
    <source>
        <dbReference type="HAMAP-Rule" id="MF_00167"/>
    </source>
</evidence>
<feature type="chain" id="PRO_1000097521" description="Translational regulator CsrA">
    <location>
        <begin position="1"/>
        <end position="61"/>
    </location>
</feature>
<dbReference type="EMBL" id="CP000950">
    <property type="protein sequence ID" value="ACA69639.1"/>
    <property type="molecule type" value="Genomic_DNA"/>
</dbReference>
<dbReference type="RefSeq" id="WP_002209449.1">
    <property type="nucleotide sequence ID" value="NZ_CP009792.1"/>
</dbReference>
<dbReference type="SMR" id="B1JJ99"/>
<dbReference type="GeneID" id="97457422"/>
<dbReference type="KEGG" id="ypy:YPK_3372"/>
<dbReference type="PATRIC" id="fig|502800.11.peg.4108"/>
<dbReference type="GO" id="GO:0005829">
    <property type="term" value="C:cytosol"/>
    <property type="evidence" value="ECO:0007669"/>
    <property type="project" value="TreeGrafter"/>
</dbReference>
<dbReference type="GO" id="GO:0048027">
    <property type="term" value="F:mRNA 5'-UTR binding"/>
    <property type="evidence" value="ECO:0007669"/>
    <property type="project" value="UniProtKB-UniRule"/>
</dbReference>
<dbReference type="GO" id="GO:0006402">
    <property type="term" value="P:mRNA catabolic process"/>
    <property type="evidence" value="ECO:0007669"/>
    <property type="project" value="InterPro"/>
</dbReference>
<dbReference type="GO" id="GO:0045947">
    <property type="term" value="P:negative regulation of translational initiation"/>
    <property type="evidence" value="ECO:0007669"/>
    <property type="project" value="UniProtKB-UniRule"/>
</dbReference>
<dbReference type="GO" id="GO:0045948">
    <property type="term" value="P:positive regulation of translational initiation"/>
    <property type="evidence" value="ECO:0007669"/>
    <property type="project" value="UniProtKB-UniRule"/>
</dbReference>
<dbReference type="GO" id="GO:0006109">
    <property type="term" value="P:regulation of carbohydrate metabolic process"/>
    <property type="evidence" value="ECO:0007669"/>
    <property type="project" value="UniProtKB-UniRule"/>
</dbReference>
<dbReference type="FunFam" id="2.60.40.4380:FF:000001">
    <property type="entry name" value="Translational regulator CsrA"/>
    <property type="match status" value="1"/>
</dbReference>
<dbReference type="Gene3D" id="2.60.40.4380">
    <property type="entry name" value="Translational regulator CsrA"/>
    <property type="match status" value="1"/>
</dbReference>
<dbReference type="HAMAP" id="MF_00167">
    <property type="entry name" value="CsrA"/>
    <property type="match status" value="1"/>
</dbReference>
<dbReference type="InterPro" id="IPR003751">
    <property type="entry name" value="CsrA"/>
</dbReference>
<dbReference type="InterPro" id="IPR036107">
    <property type="entry name" value="CsrA_sf"/>
</dbReference>
<dbReference type="NCBIfam" id="TIGR00202">
    <property type="entry name" value="csrA"/>
    <property type="match status" value="1"/>
</dbReference>
<dbReference type="NCBIfam" id="NF002469">
    <property type="entry name" value="PRK01712.1"/>
    <property type="match status" value="1"/>
</dbReference>
<dbReference type="PANTHER" id="PTHR34984">
    <property type="entry name" value="CARBON STORAGE REGULATOR"/>
    <property type="match status" value="1"/>
</dbReference>
<dbReference type="PANTHER" id="PTHR34984:SF1">
    <property type="entry name" value="CARBON STORAGE REGULATOR"/>
    <property type="match status" value="1"/>
</dbReference>
<dbReference type="Pfam" id="PF02599">
    <property type="entry name" value="CsrA"/>
    <property type="match status" value="1"/>
</dbReference>
<dbReference type="SUPFAM" id="SSF117130">
    <property type="entry name" value="CsrA-like"/>
    <property type="match status" value="1"/>
</dbReference>
<comment type="function">
    <text evidence="1">A key translational regulator that binds mRNA to regulate translation initiation and/or mRNA stability. Mediates global changes in gene expression, shifting from rapid growth to stress survival by linking envelope stress, the stringent response and the catabolite repression systems. Usually binds in the 5'-UTR; binding at or near the Shine-Dalgarno sequence prevents ribosome-binding, repressing translation, binding elsewhere in the 5'-UTR can activate translation and/or stabilize the mRNA. Its function is antagonized by small RNA(s).</text>
</comment>
<comment type="subcellular location">
    <subcellularLocation>
        <location evidence="1">Cytoplasm</location>
    </subcellularLocation>
</comment>
<comment type="similarity">
    <text evidence="1">Belongs to the CsrA/RsmA family.</text>
</comment>
<name>CSRA_YERPY</name>
<reference key="1">
    <citation type="submission" date="2008-02" db="EMBL/GenBank/DDBJ databases">
        <title>Complete sequence of Yersinia pseudotuberculosis YPIII.</title>
        <authorList>
            <consortium name="US DOE Joint Genome Institute"/>
            <person name="Copeland A."/>
            <person name="Lucas S."/>
            <person name="Lapidus A."/>
            <person name="Glavina del Rio T."/>
            <person name="Dalin E."/>
            <person name="Tice H."/>
            <person name="Bruce D."/>
            <person name="Goodwin L."/>
            <person name="Pitluck S."/>
            <person name="Munk A.C."/>
            <person name="Brettin T."/>
            <person name="Detter J.C."/>
            <person name="Han C."/>
            <person name="Tapia R."/>
            <person name="Schmutz J."/>
            <person name="Larimer F."/>
            <person name="Land M."/>
            <person name="Hauser L."/>
            <person name="Challacombe J.F."/>
            <person name="Green L."/>
            <person name="Lindler L.E."/>
            <person name="Nikolich M.P."/>
            <person name="Richardson P."/>
        </authorList>
    </citation>
    <scope>NUCLEOTIDE SEQUENCE [LARGE SCALE GENOMIC DNA]</scope>
    <source>
        <strain>YPIII</strain>
    </source>
</reference>
<protein>
    <recommendedName>
        <fullName evidence="1">Translational regulator CsrA</fullName>
    </recommendedName>
    <alternativeName>
        <fullName evidence="1">Carbon storage regulator</fullName>
    </alternativeName>
</protein>
<keyword id="KW-0010">Activator</keyword>
<keyword id="KW-0963">Cytoplasm</keyword>
<keyword id="KW-0678">Repressor</keyword>
<keyword id="KW-0694">RNA-binding</keyword>
<keyword id="KW-0810">Translation regulation</keyword>
<gene>
    <name evidence="1" type="primary">csrA</name>
    <name type="ordered locus">YPK_3372</name>
</gene>